<sequence>MVIKAQSPAGFAEEYIIESIWNNRFPPGTILPAERELSELIGVTRTTLREVLQRLARDGWLTIQHGKPTKVNNFWETSGLNILETLARLDHESVPQLIDNLLSVRTNISTIFIRTAFRQHPDKAQEVLATANEVADHADAFAELDYNIFRGLAFASGNPIYGLILNGMKGLYTRIGRHYFANPEARSLALGFYHKLSALCSEGAHDQVYETVRRYGHESGEIWHRMQKNLPGDLAIQGR</sequence>
<name>FADR_ECO8A</name>
<accession>B7LXA1</accession>
<comment type="function">
    <text evidence="1">Multifunctional regulator of fatty acid metabolism.</text>
</comment>
<comment type="subunit">
    <text evidence="1">Homodimer.</text>
</comment>
<comment type="subcellular location">
    <subcellularLocation>
        <location evidence="1">Cytoplasm</location>
    </subcellularLocation>
</comment>
<organism>
    <name type="scientific">Escherichia coli O8 (strain IAI1)</name>
    <dbReference type="NCBI Taxonomy" id="585034"/>
    <lineage>
        <taxon>Bacteria</taxon>
        <taxon>Pseudomonadati</taxon>
        <taxon>Pseudomonadota</taxon>
        <taxon>Gammaproteobacteria</taxon>
        <taxon>Enterobacterales</taxon>
        <taxon>Enterobacteriaceae</taxon>
        <taxon>Escherichia</taxon>
    </lineage>
</organism>
<reference key="1">
    <citation type="journal article" date="2009" name="PLoS Genet.">
        <title>Organised genome dynamics in the Escherichia coli species results in highly diverse adaptive paths.</title>
        <authorList>
            <person name="Touchon M."/>
            <person name="Hoede C."/>
            <person name="Tenaillon O."/>
            <person name="Barbe V."/>
            <person name="Baeriswyl S."/>
            <person name="Bidet P."/>
            <person name="Bingen E."/>
            <person name="Bonacorsi S."/>
            <person name="Bouchier C."/>
            <person name="Bouvet O."/>
            <person name="Calteau A."/>
            <person name="Chiapello H."/>
            <person name="Clermont O."/>
            <person name="Cruveiller S."/>
            <person name="Danchin A."/>
            <person name="Diard M."/>
            <person name="Dossat C."/>
            <person name="Karoui M.E."/>
            <person name="Frapy E."/>
            <person name="Garry L."/>
            <person name="Ghigo J.M."/>
            <person name="Gilles A.M."/>
            <person name="Johnson J."/>
            <person name="Le Bouguenec C."/>
            <person name="Lescat M."/>
            <person name="Mangenot S."/>
            <person name="Martinez-Jehanne V."/>
            <person name="Matic I."/>
            <person name="Nassif X."/>
            <person name="Oztas S."/>
            <person name="Petit M.A."/>
            <person name="Pichon C."/>
            <person name="Rouy Z."/>
            <person name="Ruf C.S."/>
            <person name="Schneider D."/>
            <person name="Tourret J."/>
            <person name="Vacherie B."/>
            <person name="Vallenet D."/>
            <person name="Medigue C."/>
            <person name="Rocha E.P.C."/>
            <person name="Denamur E."/>
        </authorList>
    </citation>
    <scope>NUCLEOTIDE SEQUENCE [LARGE SCALE GENOMIC DNA]</scope>
    <source>
        <strain>IAI1</strain>
    </source>
</reference>
<evidence type="ECO:0000255" key="1">
    <source>
        <dbReference type="HAMAP-Rule" id="MF_00696"/>
    </source>
</evidence>
<feature type="chain" id="PRO_1000132315" description="Fatty acid metabolism regulator protein">
    <location>
        <begin position="1"/>
        <end position="239"/>
    </location>
</feature>
<feature type="domain" description="HTH gntR-type" evidence="1">
    <location>
        <begin position="6"/>
        <end position="74"/>
    </location>
</feature>
<feature type="DNA-binding region" description="H-T-H motif" evidence="1">
    <location>
        <begin position="34"/>
        <end position="53"/>
    </location>
</feature>
<gene>
    <name evidence="1" type="primary">fadR</name>
    <name type="ordered locus">ECIAI1_1204</name>
</gene>
<keyword id="KW-0010">Activator</keyword>
<keyword id="KW-0963">Cytoplasm</keyword>
<keyword id="KW-0238">DNA-binding</keyword>
<keyword id="KW-0276">Fatty acid metabolism</keyword>
<keyword id="KW-0443">Lipid metabolism</keyword>
<keyword id="KW-0678">Repressor</keyword>
<keyword id="KW-0804">Transcription</keyword>
<keyword id="KW-0805">Transcription regulation</keyword>
<protein>
    <recommendedName>
        <fullName evidence="1">Fatty acid metabolism regulator protein</fullName>
    </recommendedName>
</protein>
<proteinExistence type="inferred from homology"/>
<dbReference type="EMBL" id="CU928160">
    <property type="protein sequence ID" value="CAQ98066.1"/>
    <property type="molecule type" value="Genomic_DNA"/>
</dbReference>
<dbReference type="RefSeq" id="WP_000234823.1">
    <property type="nucleotide sequence ID" value="NC_011741.1"/>
</dbReference>
<dbReference type="SMR" id="B7LXA1"/>
<dbReference type="GeneID" id="93776245"/>
<dbReference type="KEGG" id="ecr:ECIAI1_1204"/>
<dbReference type="HOGENOM" id="CLU_017584_9_4_6"/>
<dbReference type="GO" id="GO:0005737">
    <property type="term" value="C:cytoplasm"/>
    <property type="evidence" value="ECO:0007669"/>
    <property type="project" value="UniProtKB-SubCell"/>
</dbReference>
<dbReference type="GO" id="GO:0003677">
    <property type="term" value="F:DNA binding"/>
    <property type="evidence" value="ECO:0007669"/>
    <property type="project" value="UniProtKB-KW"/>
</dbReference>
<dbReference type="GO" id="GO:0003700">
    <property type="term" value="F:DNA-binding transcription factor activity"/>
    <property type="evidence" value="ECO:0007669"/>
    <property type="project" value="UniProtKB-UniRule"/>
</dbReference>
<dbReference type="GO" id="GO:0000062">
    <property type="term" value="F:fatty-acyl-CoA binding"/>
    <property type="evidence" value="ECO:0007669"/>
    <property type="project" value="InterPro"/>
</dbReference>
<dbReference type="GO" id="GO:0006631">
    <property type="term" value="P:fatty acid metabolic process"/>
    <property type="evidence" value="ECO:0007669"/>
    <property type="project" value="UniProtKB-KW"/>
</dbReference>
<dbReference type="GO" id="GO:0019217">
    <property type="term" value="P:regulation of fatty acid metabolic process"/>
    <property type="evidence" value="ECO:0007669"/>
    <property type="project" value="UniProtKB-UniRule"/>
</dbReference>
<dbReference type="CDD" id="cd07377">
    <property type="entry name" value="WHTH_GntR"/>
    <property type="match status" value="1"/>
</dbReference>
<dbReference type="FunFam" id="1.10.10.10:FF:000036">
    <property type="entry name" value="Fatty acid metabolism regulator protein"/>
    <property type="match status" value="1"/>
</dbReference>
<dbReference type="FunFam" id="1.20.120.530:FF:000003">
    <property type="entry name" value="Fatty acid metabolism regulator protein"/>
    <property type="match status" value="1"/>
</dbReference>
<dbReference type="Gene3D" id="1.20.120.530">
    <property type="entry name" value="GntR ligand-binding domain-like"/>
    <property type="match status" value="1"/>
</dbReference>
<dbReference type="Gene3D" id="1.10.10.10">
    <property type="entry name" value="Winged helix-like DNA-binding domain superfamily/Winged helix DNA-binding domain"/>
    <property type="match status" value="1"/>
</dbReference>
<dbReference type="HAMAP" id="MF_00696">
    <property type="entry name" value="HTH_FadR"/>
    <property type="match status" value="1"/>
</dbReference>
<dbReference type="InterPro" id="IPR014178">
    <property type="entry name" value="FA-response_TF_FadR"/>
</dbReference>
<dbReference type="InterPro" id="IPR028374">
    <property type="entry name" value="FadR_C"/>
</dbReference>
<dbReference type="InterPro" id="IPR008920">
    <property type="entry name" value="TF_FadR/GntR_C"/>
</dbReference>
<dbReference type="InterPro" id="IPR000524">
    <property type="entry name" value="Tscrpt_reg_HTH_GntR"/>
</dbReference>
<dbReference type="InterPro" id="IPR036388">
    <property type="entry name" value="WH-like_DNA-bd_sf"/>
</dbReference>
<dbReference type="InterPro" id="IPR036390">
    <property type="entry name" value="WH_DNA-bd_sf"/>
</dbReference>
<dbReference type="NCBIfam" id="TIGR02812">
    <property type="entry name" value="fadR_gamma"/>
    <property type="match status" value="1"/>
</dbReference>
<dbReference type="NCBIfam" id="NF003444">
    <property type="entry name" value="PRK04984.1"/>
    <property type="match status" value="1"/>
</dbReference>
<dbReference type="PANTHER" id="PTHR43537:SF52">
    <property type="entry name" value="FATTY ACID METABOLISM REGULATOR PROTEIN"/>
    <property type="match status" value="1"/>
</dbReference>
<dbReference type="PANTHER" id="PTHR43537">
    <property type="entry name" value="TRANSCRIPTIONAL REGULATOR, GNTR FAMILY"/>
    <property type="match status" value="1"/>
</dbReference>
<dbReference type="Pfam" id="PF07840">
    <property type="entry name" value="FadR_C"/>
    <property type="match status" value="1"/>
</dbReference>
<dbReference type="Pfam" id="PF00392">
    <property type="entry name" value="GntR"/>
    <property type="match status" value="1"/>
</dbReference>
<dbReference type="PRINTS" id="PR00035">
    <property type="entry name" value="HTHGNTR"/>
</dbReference>
<dbReference type="SMART" id="SM00345">
    <property type="entry name" value="HTH_GNTR"/>
    <property type="match status" value="1"/>
</dbReference>
<dbReference type="SUPFAM" id="SSF48008">
    <property type="entry name" value="GntR ligand-binding domain-like"/>
    <property type="match status" value="1"/>
</dbReference>
<dbReference type="SUPFAM" id="SSF46785">
    <property type="entry name" value="Winged helix' DNA-binding domain"/>
    <property type="match status" value="1"/>
</dbReference>
<dbReference type="PROSITE" id="PS50949">
    <property type="entry name" value="HTH_GNTR"/>
    <property type="match status" value="1"/>
</dbReference>